<accession>A4GCM8</accession>
<organismHost>
    <name type="scientific">Aves</name>
    <dbReference type="NCBI Taxonomy" id="8782"/>
</organismHost>
<organismHost>
    <name type="scientific">Homo sapiens</name>
    <name type="common">Human</name>
    <dbReference type="NCBI Taxonomy" id="9606"/>
</organismHost>
<organismHost>
    <name type="scientific">Sus scrofa</name>
    <name type="common">Pig</name>
    <dbReference type="NCBI Taxonomy" id="9823"/>
</organismHost>
<feature type="chain" id="PRO_0000373013" description="Protein PB1-F2">
    <location>
        <begin position="1"/>
        <end position="90"/>
    </location>
</feature>
<feature type="region of interest" description="Mitochondrial targeting sequence" evidence="1">
    <location>
        <begin position="65"/>
        <end position="87"/>
    </location>
</feature>
<feature type="site" description="Low pathogenicity" evidence="1">
    <location>
        <position position="66"/>
    </location>
</feature>
<gene>
    <name evidence="1" type="primary">PB1</name>
    <name type="synonym">PB1-F2</name>
</gene>
<dbReference type="EMBL" id="CY020475">
    <property type="protein sequence ID" value="ABO38393.1"/>
    <property type="molecule type" value="Viral_cRNA"/>
</dbReference>
<dbReference type="BMRB" id="A4GCM8"/>
<dbReference type="SMR" id="A4GCM8"/>
<dbReference type="Proteomes" id="UP000000829">
    <property type="component" value="Genome"/>
</dbReference>
<dbReference type="GO" id="GO:0044164">
    <property type="term" value="C:host cell cytosol"/>
    <property type="evidence" value="ECO:0007669"/>
    <property type="project" value="UniProtKB-SubCell"/>
</dbReference>
<dbReference type="GO" id="GO:0044192">
    <property type="term" value="C:host cell mitochondrial inner membrane"/>
    <property type="evidence" value="ECO:0007669"/>
    <property type="project" value="UniProtKB-SubCell"/>
</dbReference>
<dbReference type="GO" id="GO:0042025">
    <property type="term" value="C:host cell nucleus"/>
    <property type="evidence" value="ECO:0007669"/>
    <property type="project" value="UniProtKB-SubCell"/>
</dbReference>
<dbReference type="GO" id="GO:0016020">
    <property type="term" value="C:membrane"/>
    <property type="evidence" value="ECO:0007669"/>
    <property type="project" value="UniProtKB-UniRule"/>
</dbReference>
<dbReference type="GO" id="GO:0052150">
    <property type="term" value="P:symbiont-mediated perturbation of host apoptosis"/>
    <property type="evidence" value="ECO:0007669"/>
    <property type="project" value="UniProtKB-KW"/>
</dbReference>
<dbReference type="GO" id="GO:0039545">
    <property type="term" value="P:symbiont-mediated suppression of host cytoplasmic pattern recognition receptor signaling pathway via inhibition of MAVS activity"/>
    <property type="evidence" value="ECO:0000250"/>
    <property type="project" value="UniProtKB"/>
</dbReference>
<dbReference type="HAMAP" id="MF_04064">
    <property type="entry name" value="INFV_PB1F2"/>
    <property type="match status" value="1"/>
</dbReference>
<dbReference type="InterPro" id="IPR021045">
    <property type="entry name" value="Flu_proapoptotic_PB1-F2"/>
</dbReference>
<dbReference type="Pfam" id="PF11986">
    <property type="entry name" value="PB1-F2"/>
    <property type="match status" value="1"/>
</dbReference>
<keyword id="KW-0053">Apoptosis</keyword>
<keyword id="KW-1035">Host cytoplasm</keyword>
<keyword id="KW-1043">Host membrane</keyword>
<keyword id="KW-1045">Host mitochondrion</keyword>
<keyword id="KW-1046">Host mitochondrion inner membrane</keyword>
<keyword id="KW-1048">Host nucleus</keyword>
<keyword id="KW-0945">Host-virus interaction</keyword>
<keyword id="KW-1090">Inhibition of host innate immune response by virus</keyword>
<keyword id="KW-1097">Inhibition of host MAVS by virus</keyword>
<keyword id="KW-1113">Inhibition of host RLR pathway by virus</keyword>
<keyword id="KW-0472">Membrane</keyword>
<keyword id="KW-1119">Modulation of host cell apoptosis by virus</keyword>
<keyword id="KW-0899">Viral immunoevasion</keyword>
<organism>
    <name type="scientific">Influenza A virus (strain A/USA:Phila/1935 H1N1)</name>
    <dbReference type="NCBI Taxonomy" id="425570"/>
    <lineage>
        <taxon>Viruses</taxon>
        <taxon>Riboviria</taxon>
        <taxon>Orthornavirae</taxon>
        <taxon>Negarnaviricota</taxon>
        <taxon>Polyploviricotina</taxon>
        <taxon>Insthoviricetes</taxon>
        <taxon>Articulavirales</taxon>
        <taxon>Orthomyxoviridae</taxon>
        <taxon>Alphainfluenzavirus</taxon>
        <taxon>Alphainfluenzavirus influenzae</taxon>
        <taxon>Influenza A virus</taxon>
    </lineage>
</organism>
<proteinExistence type="inferred from homology"/>
<evidence type="ECO:0000255" key="1">
    <source>
        <dbReference type="HAMAP-Rule" id="MF_04064"/>
    </source>
</evidence>
<comment type="function">
    <text evidence="1">Plays an important role in promoting lung pathology in both primary viral infection and secondary bacterial infection. Promotes alteration of mitochondrial morphology, dissipation of mitochondrial membrane potential, and cell death. Alternatively, inhibits the production of interferon in the infected cell at the level of host mitochondrial antiviral signaling MAVS. Its level of expression differs greatly depending on which cell type is infected, in a manner that is independent of the levels of expression of other viral proteins. Monocytic cells are more affected than epithelial cells. Seems to disable virus-infected monocytes or other host innate immune cells. During early stage of infection, predisposes the mitochondria to permeability transition through interaction with host SLC25A6/ANT3 and VDAC1. These proteins participate in the formation of the permeability transition pore complex (PTPC) responsible of the release of mitochondrial products that triggers apoptosis.</text>
</comment>
<comment type="subunit">
    <text evidence="1">Oligomer. Interacts with human SLC25A6/ANT3 and VDAC1. Interacts with host MAVS.</text>
</comment>
<comment type="subcellular location">
    <subcellularLocation>
        <location evidence="1">Host mitochondrion inner membrane</location>
    </subcellularLocation>
    <subcellularLocation>
        <location evidence="1">Host nucleus</location>
    </subcellularLocation>
    <subcellularLocation>
        <location evidence="1">Host cytoplasm</location>
        <location evidence="1">Host cytosol</location>
    </subcellularLocation>
    <text evidence="1">Inner mitochondrial membrane in most cells types. Otherwise is detected in the nucleus and cytosol.</text>
</comment>
<comment type="miscellaneous">
    <text>Is not encoded in all strains, and seems to be dispensable for replication.</text>
</comment>
<comment type="similarity">
    <text evidence="1">Belongs to the influenza viruses PB1-F2 family.</text>
</comment>
<name>PB1F2_I35A3</name>
<protein>
    <recommendedName>
        <fullName evidence="1">Protein PB1-F2</fullName>
    </recommendedName>
</protein>
<reference key="1">
    <citation type="submission" date="2007-03" db="EMBL/GenBank/DDBJ databases">
        <title>The NIAID influenza genome sequencing project.</title>
        <authorList>
            <person name="Ghedin E."/>
            <person name="Spiro D."/>
            <person name="Miller N."/>
            <person name="Zaborsky J."/>
            <person name="Feldblyum T."/>
            <person name="Subbu V."/>
            <person name="Shumway M."/>
            <person name="Sparenborg J."/>
            <person name="Groveman L."/>
            <person name="Halpin R."/>
            <person name="Sitz J."/>
            <person name="Koo H."/>
            <person name="Salzberg S.L."/>
            <person name="Webster R.G."/>
            <person name="Hoffmann E."/>
            <person name="Krauss S."/>
            <person name="Naeve C."/>
            <person name="Bao Y."/>
            <person name="Bolotov P."/>
            <person name="Dernovoy D."/>
            <person name="Kiryutin B."/>
            <person name="Lipman D.J."/>
            <person name="Tatusova T."/>
        </authorList>
    </citation>
    <scope>NUCLEOTIDE SEQUENCE [GENOMIC RNA]</scope>
</reference>
<reference key="2">
    <citation type="submission" date="2007-03" db="EMBL/GenBank/DDBJ databases">
        <authorList>
            <consortium name="The NIAID Influenza Genome Sequencing Consortium"/>
        </authorList>
    </citation>
    <scope>NUCLEOTIDE SEQUENCE [GENOMIC RNA]</scope>
</reference>
<sequence length="90" mass="10769">MVQEQDTPWILSTGHINTQKGEDGQQTPKLEHRNSTRLMGHCQKTMNQVVMPKQIVYWKQWLSLRNPILVSLKTRVLKRWRLFSKHEWTS</sequence>